<keyword id="KW-0687">Ribonucleoprotein</keyword>
<keyword id="KW-0689">Ribosomal protein</keyword>
<keyword id="KW-0694">RNA-binding</keyword>
<keyword id="KW-0699">rRNA-binding</keyword>
<keyword id="KW-0820">tRNA-binding</keyword>
<proteinExistence type="inferred from homology"/>
<accession>Q1BDA0</accession>
<dbReference type="EMBL" id="CP000384">
    <property type="protein sequence ID" value="ABG07134.1"/>
    <property type="molecule type" value="Genomic_DNA"/>
</dbReference>
<dbReference type="SMR" id="Q1BDA0"/>
<dbReference type="KEGG" id="mmc:Mmcs_1020"/>
<dbReference type="HOGENOM" id="CLU_078858_2_1_11"/>
<dbReference type="BioCyc" id="MSP164756:G1G6O-1044-MONOMER"/>
<dbReference type="GO" id="GO:0022625">
    <property type="term" value="C:cytosolic large ribosomal subunit"/>
    <property type="evidence" value="ECO:0007669"/>
    <property type="project" value="TreeGrafter"/>
</dbReference>
<dbReference type="GO" id="GO:0019843">
    <property type="term" value="F:rRNA binding"/>
    <property type="evidence" value="ECO:0007669"/>
    <property type="project" value="UniProtKB-UniRule"/>
</dbReference>
<dbReference type="GO" id="GO:0003735">
    <property type="term" value="F:structural constituent of ribosome"/>
    <property type="evidence" value="ECO:0007669"/>
    <property type="project" value="InterPro"/>
</dbReference>
<dbReference type="GO" id="GO:0000049">
    <property type="term" value="F:tRNA binding"/>
    <property type="evidence" value="ECO:0007669"/>
    <property type="project" value="UniProtKB-KW"/>
</dbReference>
<dbReference type="GO" id="GO:0006412">
    <property type="term" value="P:translation"/>
    <property type="evidence" value="ECO:0007669"/>
    <property type="project" value="UniProtKB-UniRule"/>
</dbReference>
<dbReference type="CDD" id="cd01433">
    <property type="entry name" value="Ribosomal_L16_L10e"/>
    <property type="match status" value="1"/>
</dbReference>
<dbReference type="FunFam" id="3.90.1170.10:FF:000001">
    <property type="entry name" value="50S ribosomal protein L16"/>
    <property type="match status" value="1"/>
</dbReference>
<dbReference type="Gene3D" id="3.90.1170.10">
    <property type="entry name" value="Ribosomal protein L10e/L16"/>
    <property type="match status" value="1"/>
</dbReference>
<dbReference type="HAMAP" id="MF_01342">
    <property type="entry name" value="Ribosomal_uL16"/>
    <property type="match status" value="1"/>
</dbReference>
<dbReference type="InterPro" id="IPR047873">
    <property type="entry name" value="Ribosomal_uL16"/>
</dbReference>
<dbReference type="InterPro" id="IPR000114">
    <property type="entry name" value="Ribosomal_uL16_bact-type"/>
</dbReference>
<dbReference type="InterPro" id="IPR020798">
    <property type="entry name" value="Ribosomal_uL16_CS"/>
</dbReference>
<dbReference type="InterPro" id="IPR016180">
    <property type="entry name" value="Ribosomal_uL16_dom"/>
</dbReference>
<dbReference type="InterPro" id="IPR036920">
    <property type="entry name" value="Ribosomal_uL16_sf"/>
</dbReference>
<dbReference type="NCBIfam" id="TIGR01164">
    <property type="entry name" value="rplP_bact"/>
    <property type="match status" value="1"/>
</dbReference>
<dbReference type="PANTHER" id="PTHR12220">
    <property type="entry name" value="50S/60S RIBOSOMAL PROTEIN L16"/>
    <property type="match status" value="1"/>
</dbReference>
<dbReference type="PANTHER" id="PTHR12220:SF13">
    <property type="entry name" value="LARGE RIBOSOMAL SUBUNIT PROTEIN UL16M"/>
    <property type="match status" value="1"/>
</dbReference>
<dbReference type="Pfam" id="PF00252">
    <property type="entry name" value="Ribosomal_L16"/>
    <property type="match status" value="1"/>
</dbReference>
<dbReference type="PRINTS" id="PR00060">
    <property type="entry name" value="RIBOSOMALL16"/>
</dbReference>
<dbReference type="SUPFAM" id="SSF54686">
    <property type="entry name" value="Ribosomal protein L16p/L10e"/>
    <property type="match status" value="1"/>
</dbReference>
<dbReference type="PROSITE" id="PS00586">
    <property type="entry name" value="RIBOSOMAL_L16_1"/>
    <property type="match status" value="1"/>
</dbReference>
<dbReference type="PROSITE" id="PS00701">
    <property type="entry name" value="RIBOSOMAL_L16_2"/>
    <property type="match status" value="1"/>
</dbReference>
<gene>
    <name evidence="1" type="primary">rplP</name>
    <name type="ordered locus">Mmcs_1020</name>
</gene>
<sequence length="138" mass="15769">MLIPRKVKHRKQHHPRQRGIASGGTTVSFGDYGIQALEHAYITNRQIESARIAINRHIKRGGKVWINIFPDRPLTKKPAETRMGSGKGSPEWWVANVKPGRVLFELSYPDEKTARDALTRAIHKLPIKARIVTREENF</sequence>
<name>RL16_MYCSS</name>
<evidence type="ECO:0000255" key="1">
    <source>
        <dbReference type="HAMAP-Rule" id="MF_01342"/>
    </source>
</evidence>
<evidence type="ECO:0000256" key="2">
    <source>
        <dbReference type="SAM" id="MobiDB-lite"/>
    </source>
</evidence>
<evidence type="ECO:0000305" key="3"/>
<feature type="chain" id="PRO_1000054657" description="Large ribosomal subunit protein uL16">
    <location>
        <begin position="1"/>
        <end position="138"/>
    </location>
</feature>
<feature type="region of interest" description="Disordered" evidence="2">
    <location>
        <begin position="1"/>
        <end position="23"/>
    </location>
</feature>
<feature type="compositionally biased region" description="Basic residues" evidence="2">
    <location>
        <begin position="1"/>
        <end position="17"/>
    </location>
</feature>
<protein>
    <recommendedName>
        <fullName evidence="1">Large ribosomal subunit protein uL16</fullName>
    </recommendedName>
    <alternativeName>
        <fullName evidence="3">50S ribosomal protein L16</fullName>
    </alternativeName>
</protein>
<reference key="1">
    <citation type="submission" date="2006-06" db="EMBL/GenBank/DDBJ databases">
        <title>Complete sequence of chromosome of Mycobacterium sp. MCS.</title>
        <authorList>
            <consortium name="US DOE Joint Genome Institute"/>
            <person name="Copeland A."/>
            <person name="Lucas S."/>
            <person name="Lapidus A."/>
            <person name="Barry K."/>
            <person name="Detter J.C."/>
            <person name="Glavina del Rio T."/>
            <person name="Hammon N."/>
            <person name="Israni S."/>
            <person name="Dalin E."/>
            <person name="Tice H."/>
            <person name="Pitluck S."/>
            <person name="Martinez M."/>
            <person name="Schmutz J."/>
            <person name="Larimer F."/>
            <person name="Land M."/>
            <person name="Hauser L."/>
            <person name="Kyrpides N."/>
            <person name="Kim E."/>
            <person name="Miller C.D."/>
            <person name="Hughes J.E."/>
            <person name="Anderson A.J."/>
            <person name="Sims R.C."/>
            <person name="Richardson P."/>
        </authorList>
    </citation>
    <scope>NUCLEOTIDE SEQUENCE [LARGE SCALE GENOMIC DNA]</scope>
    <source>
        <strain>MCS</strain>
    </source>
</reference>
<comment type="function">
    <text evidence="1">Binds 23S rRNA and is also seen to make contacts with the A and possibly P site tRNAs.</text>
</comment>
<comment type="subunit">
    <text evidence="1">Part of the 50S ribosomal subunit.</text>
</comment>
<comment type="similarity">
    <text evidence="1">Belongs to the universal ribosomal protein uL16 family.</text>
</comment>
<organism>
    <name type="scientific">Mycobacterium sp. (strain MCS)</name>
    <dbReference type="NCBI Taxonomy" id="164756"/>
    <lineage>
        <taxon>Bacteria</taxon>
        <taxon>Bacillati</taxon>
        <taxon>Actinomycetota</taxon>
        <taxon>Actinomycetes</taxon>
        <taxon>Mycobacteriales</taxon>
        <taxon>Mycobacteriaceae</taxon>
        <taxon>Mycobacterium</taxon>
    </lineage>
</organism>